<accession>B2TWI4</accession>
<evidence type="ECO:0000255" key="1">
    <source>
        <dbReference type="HAMAP-Rule" id="MF_00218"/>
    </source>
</evidence>
<name>DCUP_SHIB3</name>
<keyword id="KW-0963">Cytoplasm</keyword>
<keyword id="KW-0210">Decarboxylase</keyword>
<keyword id="KW-0456">Lyase</keyword>
<keyword id="KW-0627">Porphyrin biosynthesis</keyword>
<keyword id="KW-1185">Reference proteome</keyword>
<sequence length="354" mass="39248">MTELKNDRYLRALLRQPVDVTPVWMMRQAGRYLPEYKATRAQAGDFMSLCKNAELACEVTLQPLRRYPLDAAILFSDILTVPDAMGLGLYFEAGEGPRFTSPVTCKADVDKLPIPDPEDELGYVMNAVRTIRRELKGEVPLIGFSGSPWTLATYMVEGGSSKAFTVIKKMMYADPQALHALLDKLAKSVTLYLNAQIKAGAQAVMIFDTWGGVLTGRDYQQFSLYYMHKIVDGLLRENDGRRVPVTLFTKGGGQWLEAMAETGCDALGLDWTTDIADARRRVGNKVALQGNMDPSMLYAPPARIEEEVATILAGFGHGEGHVFNLGHGIHQDVPPEHAGVFVEAVHRLSEQYHR</sequence>
<organism>
    <name type="scientific">Shigella boydii serotype 18 (strain CDC 3083-94 / BS512)</name>
    <dbReference type="NCBI Taxonomy" id="344609"/>
    <lineage>
        <taxon>Bacteria</taxon>
        <taxon>Pseudomonadati</taxon>
        <taxon>Pseudomonadota</taxon>
        <taxon>Gammaproteobacteria</taxon>
        <taxon>Enterobacterales</taxon>
        <taxon>Enterobacteriaceae</taxon>
        <taxon>Shigella</taxon>
    </lineage>
</organism>
<dbReference type="EC" id="4.1.1.37" evidence="1"/>
<dbReference type="EMBL" id="CP001063">
    <property type="protein sequence ID" value="ACD09583.1"/>
    <property type="molecule type" value="Genomic_DNA"/>
</dbReference>
<dbReference type="RefSeq" id="WP_000137657.1">
    <property type="nucleotide sequence ID" value="NC_010658.1"/>
</dbReference>
<dbReference type="SMR" id="B2TWI4"/>
<dbReference type="STRING" id="344609.SbBS512_E4488"/>
<dbReference type="GeneID" id="93777897"/>
<dbReference type="KEGG" id="sbc:SbBS512_E4488"/>
<dbReference type="HOGENOM" id="CLU_040933_0_0_6"/>
<dbReference type="UniPathway" id="UPA00251">
    <property type="reaction ID" value="UER00321"/>
</dbReference>
<dbReference type="Proteomes" id="UP000001030">
    <property type="component" value="Chromosome"/>
</dbReference>
<dbReference type="GO" id="GO:0005829">
    <property type="term" value="C:cytosol"/>
    <property type="evidence" value="ECO:0007669"/>
    <property type="project" value="TreeGrafter"/>
</dbReference>
<dbReference type="GO" id="GO:0004853">
    <property type="term" value="F:uroporphyrinogen decarboxylase activity"/>
    <property type="evidence" value="ECO:0007669"/>
    <property type="project" value="UniProtKB-UniRule"/>
</dbReference>
<dbReference type="GO" id="GO:0019353">
    <property type="term" value="P:protoporphyrinogen IX biosynthetic process from glutamate"/>
    <property type="evidence" value="ECO:0007669"/>
    <property type="project" value="TreeGrafter"/>
</dbReference>
<dbReference type="CDD" id="cd00717">
    <property type="entry name" value="URO-D"/>
    <property type="match status" value="1"/>
</dbReference>
<dbReference type="FunFam" id="3.20.20.210:FF:000001">
    <property type="entry name" value="Uroporphyrinogen decarboxylase"/>
    <property type="match status" value="1"/>
</dbReference>
<dbReference type="Gene3D" id="3.20.20.210">
    <property type="match status" value="1"/>
</dbReference>
<dbReference type="HAMAP" id="MF_00218">
    <property type="entry name" value="URO_D"/>
    <property type="match status" value="1"/>
</dbReference>
<dbReference type="InterPro" id="IPR038071">
    <property type="entry name" value="UROD/MetE-like_sf"/>
</dbReference>
<dbReference type="InterPro" id="IPR006361">
    <property type="entry name" value="Uroporphyrinogen_deCO2ase_HemE"/>
</dbReference>
<dbReference type="InterPro" id="IPR000257">
    <property type="entry name" value="Uroporphyrinogen_deCOase"/>
</dbReference>
<dbReference type="NCBIfam" id="TIGR01464">
    <property type="entry name" value="hemE"/>
    <property type="match status" value="1"/>
</dbReference>
<dbReference type="PANTHER" id="PTHR21091">
    <property type="entry name" value="METHYLTETRAHYDROFOLATE:HOMOCYSTEINE METHYLTRANSFERASE RELATED"/>
    <property type="match status" value="1"/>
</dbReference>
<dbReference type="PANTHER" id="PTHR21091:SF169">
    <property type="entry name" value="UROPORPHYRINOGEN DECARBOXYLASE"/>
    <property type="match status" value="1"/>
</dbReference>
<dbReference type="Pfam" id="PF01208">
    <property type="entry name" value="URO-D"/>
    <property type="match status" value="1"/>
</dbReference>
<dbReference type="SUPFAM" id="SSF51726">
    <property type="entry name" value="UROD/MetE-like"/>
    <property type="match status" value="1"/>
</dbReference>
<dbReference type="PROSITE" id="PS00906">
    <property type="entry name" value="UROD_1"/>
    <property type="match status" value="1"/>
</dbReference>
<dbReference type="PROSITE" id="PS00907">
    <property type="entry name" value="UROD_2"/>
    <property type="match status" value="1"/>
</dbReference>
<feature type="chain" id="PRO_1000100020" description="Uroporphyrinogen decarboxylase">
    <location>
        <begin position="1"/>
        <end position="354"/>
    </location>
</feature>
<feature type="binding site" evidence="1">
    <location>
        <begin position="27"/>
        <end position="31"/>
    </location>
    <ligand>
        <name>substrate</name>
    </ligand>
</feature>
<feature type="binding site" evidence="1">
    <location>
        <position position="77"/>
    </location>
    <ligand>
        <name>substrate</name>
    </ligand>
</feature>
<feature type="binding site" evidence="1">
    <location>
        <position position="154"/>
    </location>
    <ligand>
        <name>substrate</name>
    </ligand>
</feature>
<feature type="binding site" evidence="1">
    <location>
        <position position="209"/>
    </location>
    <ligand>
        <name>substrate</name>
    </ligand>
</feature>
<feature type="binding site" evidence="1">
    <location>
        <position position="327"/>
    </location>
    <ligand>
        <name>substrate</name>
    </ligand>
</feature>
<feature type="site" description="Transition state stabilizer" evidence="1">
    <location>
        <position position="77"/>
    </location>
</feature>
<protein>
    <recommendedName>
        <fullName evidence="1">Uroporphyrinogen decarboxylase</fullName>
        <shortName evidence="1">UPD</shortName>
        <shortName evidence="1">URO-D</shortName>
        <ecNumber evidence="1">4.1.1.37</ecNumber>
    </recommendedName>
</protein>
<comment type="function">
    <text evidence="1">Catalyzes the decarboxylation of four acetate groups of uroporphyrinogen-III to yield coproporphyrinogen-III.</text>
</comment>
<comment type="catalytic activity">
    <reaction evidence="1">
        <text>uroporphyrinogen III + 4 H(+) = coproporphyrinogen III + 4 CO2</text>
        <dbReference type="Rhea" id="RHEA:19865"/>
        <dbReference type="ChEBI" id="CHEBI:15378"/>
        <dbReference type="ChEBI" id="CHEBI:16526"/>
        <dbReference type="ChEBI" id="CHEBI:57308"/>
        <dbReference type="ChEBI" id="CHEBI:57309"/>
        <dbReference type="EC" id="4.1.1.37"/>
    </reaction>
</comment>
<comment type="pathway">
    <text evidence="1">Porphyrin-containing compound metabolism; protoporphyrin-IX biosynthesis; coproporphyrinogen-III from 5-aminolevulinate: step 4/4.</text>
</comment>
<comment type="subunit">
    <text evidence="1">Homodimer.</text>
</comment>
<comment type="subcellular location">
    <subcellularLocation>
        <location evidence="1">Cytoplasm</location>
    </subcellularLocation>
</comment>
<comment type="similarity">
    <text evidence="1">Belongs to the uroporphyrinogen decarboxylase family.</text>
</comment>
<reference key="1">
    <citation type="submission" date="2008-05" db="EMBL/GenBank/DDBJ databases">
        <title>Complete sequence of Shigella boydii serotype 18 strain BS512.</title>
        <authorList>
            <person name="Rasko D.A."/>
            <person name="Rosovitz M."/>
            <person name="Maurelli A.T."/>
            <person name="Myers G."/>
            <person name="Seshadri R."/>
            <person name="Cer R."/>
            <person name="Jiang L."/>
            <person name="Ravel J."/>
            <person name="Sebastian Y."/>
        </authorList>
    </citation>
    <scope>NUCLEOTIDE SEQUENCE [LARGE SCALE GENOMIC DNA]</scope>
    <source>
        <strain>CDC 3083-94 / BS512</strain>
    </source>
</reference>
<gene>
    <name evidence="1" type="primary">hemE</name>
    <name type="ordered locus">SbBS512_E4488</name>
</gene>
<proteinExistence type="inferred from homology"/>